<protein>
    <recommendedName>
        <fullName>NAD(+) kinase</fullName>
        <ecNumber evidence="2">2.7.1.23</ecNumber>
    </recommendedName>
    <alternativeName>
        <fullName>Unknown transcript 1 protein</fullName>
    </alternativeName>
</protein>
<feature type="chain" id="PRO_0000120716" description="NAD(+) kinase">
    <location>
        <begin position="1"/>
        <end position="530"/>
    </location>
</feature>
<feature type="region of interest" description="Disordered" evidence="1">
    <location>
        <begin position="1"/>
        <end position="27"/>
    </location>
</feature>
<feature type="region of interest" description="Disordered" evidence="1">
    <location>
        <begin position="57"/>
        <end position="99"/>
    </location>
</feature>
<feature type="region of interest" description="Disordered" evidence="1">
    <location>
        <begin position="486"/>
        <end position="530"/>
    </location>
</feature>
<feature type="compositionally biased region" description="Basic and acidic residues" evidence="1">
    <location>
        <begin position="13"/>
        <end position="25"/>
    </location>
</feature>
<feature type="compositionally biased region" description="Low complexity" evidence="1">
    <location>
        <begin position="59"/>
        <end position="75"/>
    </location>
</feature>
<feature type="compositionally biased region" description="Polar residues" evidence="1">
    <location>
        <begin position="88"/>
        <end position="99"/>
    </location>
</feature>
<feature type="compositionally biased region" description="Acidic residues" evidence="1">
    <location>
        <begin position="499"/>
        <end position="508"/>
    </location>
</feature>
<feature type="modified residue" description="Phosphoserine" evidence="5 6">
    <location>
        <position position="499"/>
    </location>
</feature>
<feature type="modified residue" description="Phosphoserine" evidence="5 6">
    <location>
        <position position="503"/>
    </location>
</feature>
<feature type="sequence conflict" description="In Ref. 6; AAT92918." evidence="4" ref="6">
    <original>A</original>
    <variation>V</variation>
    <location>
        <position position="337"/>
    </location>
</feature>
<comment type="function">
    <text evidence="2">Specifically phosphorylates NAD in the presence of ATP, dATP, or CTP as phosphoryl donors.</text>
</comment>
<comment type="catalytic activity">
    <reaction evidence="2">
        <text>NAD(+) + ATP = ADP + NADP(+) + H(+)</text>
        <dbReference type="Rhea" id="RHEA:18629"/>
        <dbReference type="ChEBI" id="CHEBI:15378"/>
        <dbReference type="ChEBI" id="CHEBI:30616"/>
        <dbReference type="ChEBI" id="CHEBI:57540"/>
        <dbReference type="ChEBI" id="CHEBI:58349"/>
        <dbReference type="ChEBI" id="CHEBI:456216"/>
        <dbReference type="EC" id="2.7.1.23"/>
    </reaction>
    <physiologicalReaction direction="left-to-right" evidence="2">
        <dbReference type="Rhea" id="RHEA:18630"/>
    </physiologicalReaction>
</comment>
<comment type="biophysicochemical properties">
    <kinetics>
        <KM evidence="2">0.5 mM for NAD</KM>
        <KM evidence="2">0.6 mM for ATP</KM>
    </kinetics>
    <phDependence>
        <text evidence="2">Optimum pH is 8.0.</text>
    </phDependence>
</comment>
<comment type="subunit">
    <text evidence="2">Homohexamer.</text>
</comment>
<comment type="interaction">
    <interactant intactId="EBI-20174">
        <id>P21373</id>
    </interactant>
    <interactant intactId="EBI-22350">
        <id>P32622</id>
        <label>YEF1</label>
    </interactant>
    <organismsDiffer>false</organismsDiffer>
    <experiments>5</experiments>
</comment>
<comment type="miscellaneous">
    <text evidence="3">Present with 5040 molecules/cell in log phase SD medium.</text>
</comment>
<comment type="similarity">
    <text evidence="4">Belongs to the NAD kinase family.</text>
</comment>
<comment type="caution">
    <text evidence="4">Was briefly thought to be FRE2.</text>
</comment>
<accession>P21373</accession>
<accession>D6VWM0</accession>
<accession>E9P8Y8</accession>
<accession>Q54AD8</accession>
<keyword id="KW-0067">ATP-binding</keyword>
<keyword id="KW-0418">Kinase</keyword>
<keyword id="KW-0520">NAD</keyword>
<keyword id="KW-0521">NADP</keyword>
<keyword id="KW-0547">Nucleotide-binding</keyword>
<keyword id="KW-0597">Phosphoprotein</keyword>
<keyword id="KW-1185">Reference proteome</keyword>
<keyword id="KW-0808">Transferase</keyword>
<proteinExistence type="evidence at protein level"/>
<dbReference type="EC" id="2.7.1.23" evidence="2"/>
<dbReference type="EMBL" id="AB044344">
    <property type="protein sequence ID" value="BAB83863.1"/>
    <property type="molecule type" value="Genomic_DNA"/>
</dbReference>
<dbReference type="EMBL" id="L26347">
    <property type="protein sequence ID" value="AAA62857.1"/>
    <property type="molecule type" value="Genomic_DNA"/>
</dbReference>
<dbReference type="EMBL" id="L36344">
    <property type="protein sequence ID" value="AAA88752.1"/>
    <property type="molecule type" value="Genomic_DNA"/>
</dbReference>
<dbReference type="EMBL" id="M37696">
    <property type="status" value="NOT_ANNOTATED_CDS"/>
    <property type="molecule type" value="Genomic_DNA"/>
</dbReference>
<dbReference type="EMBL" id="Z49549">
    <property type="protein sequence ID" value="CAA89577.1"/>
    <property type="molecule type" value="Genomic_DNA"/>
</dbReference>
<dbReference type="EMBL" id="AY692899">
    <property type="protein sequence ID" value="AAT92918.1"/>
    <property type="molecule type" value="Genomic_DNA"/>
</dbReference>
<dbReference type="EMBL" id="BK006943">
    <property type="protein sequence ID" value="DAA08836.1"/>
    <property type="molecule type" value="Genomic_DNA"/>
</dbReference>
<dbReference type="PIR" id="S46589">
    <property type="entry name" value="S46589"/>
</dbReference>
<dbReference type="RefSeq" id="NP_012583.1">
    <property type="nucleotide sequence ID" value="NM_001181707.1"/>
</dbReference>
<dbReference type="SMR" id="P21373"/>
<dbReference type="BioGRID" id="33802">
    <property type="interactions" value="100"/>
</dbReference>
<dbReference type="DIP" id="DIP-4479N"/>
<dbReference type="FunCoup" id="P21373">
    <property type="interactions" value="650"/>
</dbReference>
<dbReference type="IntAct" id="P21373">
    <property type="interactions" value="11"/>
</dbReference>
<dbReference type="MINT" id="P21373"/>
<dbReference type="STRING" id="4932.YJR049C"/>
<dbReference type="iPTMnet" id="P21373"/>
<dbReference type="PaxDb" id="4932-YJR049C"/>
<dbReference type="PeptideAtlas" id="P21373"/>
<dbReference type="EnsemblFungi" id="YJR049C_mRNA">
    <property type="protein sequence ID" value="YJR049C"/>
    <property type="gene ID" value="YJR049C"/>
</dbReference>
<dbReference type="GeneID" id="853508"/>
<dbReference type="KEGG" id="sce:YJR049C"/>
<dbReference type="AGR" id="SGD:S000003810"/>
<dbReference type="SGD" id="S000003810">
    <property type="gene designation" value="UTR1"/>
</dbReference>
<dbReference type="VEuPathDB" id="FungiDB:YJR049C"/>
<dbReference type="eggNOG" id="KOG2178">
    <property type="taxonomic scope" value="Eukaryota"/>
</dbReference>
<dbReference type="GeneTree" id="ENSGT00940000169386"/>
<dbReference type="HOGENOM" id="CLU_008831_1_5_1"/>
<dbReference type="InParanoid" id="P21373"/>
<dbReference type="OMA" id="MRMRLCC"/>
<dbReference type="OrthoDB" id="24581at2759"/>
<dbReference type="BioCyc" id="MetaCyc:G3O-31684-MONOMER"/>
<dbReference type="BioCyc" id="YEAST:G3O-31684-MONOMER"/>
<dbReference type="BRENDA" id="2.7.1.23">
    <property type="organism ID" value="984"/>
</dbReference>
<dbReference type="BRENDA" id="2.7.1.86">
    <property type="organism ID" value="984"/>
</dbReference>
<dbReference type="Reactome" id="R-SCE-196807">
    <property type="pathway name" value="Nicotinate metabolism"/>
</dbReference>
<dbReference type="BioGRID-ORCS" id="853508">
    <property type="hits" value="2 hits in 10 CRISPR screens"/>
</dbReference>
<dbReference type="PRO" id="PR:P21373"/>
<dbReference type="Proteomes" id="UP000002311">
    <property type="component" value="Chromosome X"/>
</dbReference>
<dbReference type="RNAct" id="P21373">
    <property type="molecule type" value="protein"/>
</dbReference>
<dbReference type="GO" id="GO:0005737">
    <property type="term" value="C:cytoplasm"/>
    <property type="evidence" value="ECO:0007005"/>
    <property type="project" value="SGD"/>
</dbReference>
<dbReference type="GO" id="GO:0005634">
    <property type="term" value="C:nucleus"/>
    <property type="evidence" value="ECO:0007005"/>
    <property type="project" value="SGD"/>
</dbReference>
<dbReference type="GO" id="GO:0005524">
    <property type="term" value="F:ATP binding"/>
    <property type="evidence" value="ECO:0007669"/>
    <property type="project" value="UniProtKB-KW"/>
</dbReference>
<dbReference type="GO" id="GO:0003951">
    <property type="term" value="F:NAD+ kinase activity"/>
    <property type="evidence" value="ECO:0000314"/>
    <property type="project" value="SGD"/>
</dbReference>
<dbReference type="GO" id="GO:0042736">
    <property type="term" value="F:NADH kinase activity"/>
    <property type="evidence" value="ECO:0000314"/>
    <property type="project" value="SGD"/>
</dbReference>
<dbReference type="GO" id="GO:0006879">
    <property type="term" value="P:intracellular iron ion homeostasis"/>
    <property type="evidence" value="ECO:0000315"/>
    <property type="project" value="SGD"/>
</dbReference>
<dbReference type="GO" id="GO:0019674">
    <property type="term" value="P:NAD metabolic process"/>
    <property type="evidence" value="ECO:0007669"/>
    <property type="project" value="InterPro"/>
</dbReference>
<dbReference type="GO" id="GO:0006741">
    <property type="term" value="P:NADP biosynthetic process"/>
    <property type="evidence" value="ECO:0000314"/>
    <property type="project" value="SGD"/>
</dbReference>
<dbReference type="FunFam" id="3.40.50.10330:FF:000025">
    <property type="entry name" value="NAD+ kinase Utr1"/>
    <property type="match status" value="1"/>
</dbReference>
<dbReference type="FunFam" id="2.60.200.30:FF:000009">
    <property type="entry name" value="Poly(P)/ATP NAD kinase"/>
    <property type="match status" value="1"/>
</dbReference>
<dbReference type="Gene3D" id="3.40.50.10330">
    <property type="entry name" value="Probable inorganic polyphosphate/atp-NAD kinase, domain 1"/>
    <property type="match status" value="1"/>
</dbReference>
<dbReference type="Gene3D" id="2.60.200.30">
    <property type="entry name" value="Probable inorganic polyphosphate/atp-NAD kinase, domain 2"/>
    <property type="match status" value="1"/>
</dbReference>
<dbReference type="HAMAP" id="MF_00361">
    <property type="entry name" value="NAD_kinase"/>
    <property type="match status" value="1"/>
</dbReference>
<dbReference type="InterPro" id="IPR017438">
    <property type="entry name" value="ATP-NAD_kinase_N"/>
</dbReference>
<dbReference type="InterPro" id="IPR017437">
    <property type="entry name" value="ATP-NAD_kinase_PpnK-typ_C"/>
</dbReference>
<dbReference type="InterPro" id="IPR016064">
    <property type="entry name" value="NAD/diacylglycerol_kinase_sf"/>
</dbReference>
<dbReference type="InterPro" id="IPR002504">
    <property type="entry name" value="NADK"/>
</dbReference>
<dbReference type="PANTHER" id="PTHR20275">
    <property type="entry name" value="NAD KINASE"/>
    <property type="match status" value="1"/>
</dbReference>
<dbReference type="PANTHER" id="PTHR20275:SF0">
    <property type="entry name" value="NAD KINASE"/>
    <property type="match status" value="1"/>
</dbReference>
<dbReference type="Pfam" id="PF01513">
    <property type="entry name" value="NAD_kinase"/>
    <property type="match status" value="1"/>
</dbReference>
<dbReference type="Pfam" id="PF20143">
    <property type="entry name" value="NAD_kinase_C"/>
    <property type="match status" value="1"/>
</dbReference>
<dbReference type="SUPFAM" id="SSF111331">
    <property type="entry name" value="NAD kinase/diacylglycerol kinase-like"/>
    <property type="match status" value="1"/>
</dbReference>
<name>UTR1_YEAST</name>
<organism>
    <name type="scientific">Saccharomyces cerevisiae (strain ATCC 204508 / S288c)</name>
    <name type="common">Baker's yeast</name>
    <dbReference type="NCBI Taxonomy" id="559292"/>
    <lineage>
        <taxon>Eukaryota</taxon>
        <taxon>Fungi</taxon>
        <taxon>Dikarya</taxon>
        <taxon>Ascomycota</taxon>
        <taxon>Saccharomycotina</taxon>
        <taxon>Saccharomycetes</taxon>
        <taxon>Saccharomycetales</taxon>
        <taxon>Saccharomycetaceae</taxon>
        <taxon>Saccharomyces</taxon>
    </lineage>
</organism>
<evidence type="ECO:0000256" key="1">
    <source>
        <dbReference type="SAM" id="MobiDB-lite"/>
    </source>
</evidence>
<evidence type="ECO:0000269" key="2">
    <source>
    </source>
</evidence>
<evidence type="ECO:0000269" key="3">
    <source>
    </source>
</evidence>
<evidence type="ECO:0000305" key="4"/>
<evidence type="ECO:0007744" key="5">
    <source>
    </source>
</evidence>
<evidence type="ECO:0007744" key="6">
    <source>
    </source>
</evidence>
<sequence length="530" mass="59469">MKENDMNNGVDKWVNEEDGRNDHHNNNNNLMKKAMMNNEQIDRTQDIDNAKEMLRKISSESSSRRSSLLNKDSSLVNGNANSGGGTSINGTRGSSKSSNTHFQYASTAYGVRMLSKDISNTKVELDVENLMIVTKLNDVSLYFLTRELVEWVLVHFPRVTVYVDSELKNSKKFAAGELCEDSKCRESRIKYWTKDFIREHDVFFDLVVTLGGDGTVLFVSSIFQRHVPPVMSFSLGSLGFLTNFKFEHFREDLPRIMNHKIKTNLRLRLECTIYRRHRPEVDPNTGKKICVVEKLSTHHILNEVTIDRGPSPFLSMLELYGDGSLMTVAQADGLIAATPTGSTAYSLSAGGSLVCPTVNAIALTPICPHALSFRPIILPESINLKVKVSMKSRAPAWAAFDGKDRIELQKGDFITICASPYAFPTVEASPDEFINSISRQLNWNVREQQKSFTHILSQKNQEKYAHEANKVRNQAEPLEVIRDKYSLEADATKENNNGSDDESDDESVNCEACKLKPSSVPKPSQARFSV</sequence>
<reference key="1">
    <citation type="journal article" date="2001" name="FEMS Microbiol. Lett.">
        <title>Molecular cloning and identification of UTR1 of a yeast Saccharomyces cerevisiae as a gene encoding an NAD kinase.</title>
        <authorList>
            <person name="Kawai S."/>
            <person name="Mori S."/>
            <person name="Suzuki S."/>
            <person name="Murata K."/>
        </authorList>
    </citation>
    <scope>NUCLEOTIDE SEQUENCE [GENOMIC DNA]</scope>
    <scope>FUNCTION</scope>
    <scope>CATALYTIC ACTIVITY</scope>
    <scope>BIOPHYSICOCHEMICAL PROPERTIES</scope>
    <scope>SUBUNIT</scope>
</reference>
<reference key="2">
    <citation type="journal article" date="1990" name="Gene">
        <title>Nucleotide sequence of the COR region: a cluster of six genes in the yeast Saccharomyces cerevisiae.</title>
        <authorList>
            <person name="Melnick L."/>
            <person name="Sherman F."/>
        </authorList>
    </citation>
    <scope>PRELIMINARY NUCLEOTIDE SEQUENCE</scope>
</reference>
<reference key="3">
    <citation type="journal article" date="1994" name="Yeast">
        <title>Revised nucleotide sequence of the COR region of yeast Saccharomyces cerevisiae chromosome X.</title>
        <authorList>
            <person name="Huang M.-E."/>
            <person name="Manus V."/>
            <person name="Chuat J.-C."/>
            <person name="Galibert F."/>
        </authorList>
    </citation>
    <scope>NUCLEOTIDE SEQUENCE [GENOMIC DNA]</scope>
    <source>
        <strain>ATCC 204508 / S288c</strain>
    </source>
</reference>
<reference key="4">
    <citation type="journal article" date="1996" name="EMBO J.">
        <title>Complete nucleotide sequence of Saccharomyces cerevisiae chromosome X.</title>
        <authorList>
            <person name="Galibert F."/>
            <person name="Alexandraki D."/>
            <person name="Baur A."/>
            <person name="Boles E."/>
            <person name="Chalwatzis N."/>
            <person name="Chuat J.-C."/>
            <person name="Coster F."/>
            <person name="Cziepluch C."/>
            <person name="de Haan M."/>
            <person name="Domdey H."/>
            <person name="Durand P."/>
            <person name="Entian K.-D."/>
            <person name="Gatius M."/>
            <person name="Goffeau A."/>
            <person name="Grivell L.A."/>
            <person name="Hennemann A."/>
            <person name="Herbert C.J."/>
            <person name="Heumann K."/>
            <person name="Hilger F."/>
            <person name="Hollenberg C.P."/>
            <person name="Huang M.-E."/>
            <person name="Jacq C."/>
            <person name="Jauniaux J.-C."/>
            <person name="Katsoulou C."/>
            <person name="Kirchrath L."/>
            <person name="Kleine K."/>
            <person name="Kordes E."/>
            <person name="Koetter P."/>
            <person name="Liebl S."/>
            <person name="Louis E.J."/>
            <person name="Manus V."/>
            <person name="Mewes H.-W."/>
            <person name="Miosga T."/>
            <person name="Obermaier B."/>
            <person name="Perea J."/>
            <person name="Pohl T.M."/>
            <person name="Portetelle D."/>
            <person name="Pujol A."/>
            <person name="Purnelle B."/>
            <person name="Ramezani Rad M."/>
            <person name="Rasmussen S.W."/>
            <person name="Rose M."/>
            <person name="Rossau R."/>
            <person name="Schaaff-Gerstenschlaeger I."/>
            <person name="Smits P.H.M."/>
            <person name="Scarcez T."/>
            <person name="Soriano N."/>
            <person name="To Van D."/>
            <person name="Tzermia M."/>
            <person name="Van Broekhoven A."/>
            <person name="Vandenbol M."/>
            <person name="Wedler H."/>
            <person name="von Wettstein D."/>
            <person name="Wambutt R."/>
            <person name="Zagulski M."/>
            <person name="Zollner A."/>
            <person name="Karpfinger-Hartl L."/>
        </authorList>
    </citation>
    <scope>NUCLEOTIDE SEQUENCE [LARGE SCALE GENOMIC DNA]</scope>
    <source>
        <strain>ATCC 204508 / S288c</strain>
    </source>
</reference>
<reference key="5">
    <citation type="journal article" date="2014" name="G3 (Bethesda)">
        <title>The reference genome sequence of Saccharomyces cerevisiae: Then and now.</title>
        <authorList>
            <person name="Engel S.R."/>
            <person name="Dietrich F.S."/>
            <person name="Fisk D.G."/>
            <person name="Binkley G."/>
            <person name="Balakrishnan R."/>
            <person name="Costanzo M.C."/>
            <person name="Dwight S.S."/>
            <person name="Hitz B.C."/>
            <person name="Karra K."/>
            <person name="Nash R.S."/>
            <person name="Weng S."/>
            <person name="Wong E.D."/>
            <person name="Lloyd P."/>
            <person name="Skrzypek M.S."/>
            <person name="Miyasato S.R."/>
            <person name="Simison M."/>
            <person name="Cherry J.M."/>
        </authorList>
    </citation>
    <scope>GENOME REANNOTATION</scope>
    <source>
        <strain>ATCC 204508 / S288c</strain>
    </source>
</reference>
<reference key="6">
    <citation type="journal article" date="2007" name="Genome Res.">
        <title>Approaching a complete repository of sequence-verified protein-encoding clones for Saccharomyces cerevisiae.</title>
        <authorList>
            <person name="Hu Y."/>
            <person name="Rolfs A."/>
            <person name="Bhullar B."/>
            <person name="Murthy T.V.S."/>
            <person name="Zhu C."/>
            <person name="Berger M.F."/>
            <person name="Camargo A.A."/>
            <person name="Kelley F."/>
            <person name="McCarron S."/>
            <person name="Jepson D."/>
            <person name="Richardson A."/>
            <person name="Raphael J."/>
            <person name="Moreira D."/>
            <person name="Taycher E."/>
            <person name="Zuo D."/>
            <person name="Mohr S."/>
            <person name="Kane M.F."/>
            <person name="Williamson J."/>
            <person name="Simpson A.J.G."/>
            <person name="Bulyk M.L."/>
            <person name="Harlow E."/>
            <person name="Marsischky G."/>
            <person name="Kolodner R.D."/>
            <person name="LaBaer J."/>
        </authorList>
    </citation>
    <scope>NUCLEOTIDE SEQUENCE [GENOMIC DNA]</scope>
    <source>
        <strain>ATCC 204508 / S288c</strain>
    </source>
</reference>
<reference key="7">
    <citation type="journal article" date="2003" name="Nature">
        <title>Global analysis of protein expression in yeast.</title>
        <authorList>
            <person name="Ghaemmaghami S."/>
            <person name="Huh W.-K."/>
            <person name="Bower K."/>
            <person name="Howson R.W."/>
            <person name="Belle A."/>
            <person name="Dephoure N."/>
            <person name="O'Shea E.K."/>
            <person name="Weissman J.S."/>
        </authorList>
    </citation>
    <scope>LEVEL OF PROTEIN EXPRESSION [LARGE SCALE ANALYSIS]</scope>
</reference>
<reference key="8">
    <citation type="journal article" date="2007" name="Proc. Natl. Acad. Sci. U.S.A.">
        <title>Analysis of phosphorylation sites on proteins from Saccharomyces cerevisiae by electron transfer dissociation (ETD) mass spectrometry.</title>
        <authorList>
            <person name="Chi A."/>
            <person name="Huttenhower C."/>
            <person name="Geer L.Y."/>
            <person name="Coon J.J."/>
            <person name="Syka J.E.P."/>
            <person name="Bai D.L."/>
            <person name="Shabanowitz J."/>
            <person name="Burke D.J."/>
            <person name="Troyanskaya O.G."/>
            <person name="Hunt D.F."/>
        </authorList>
    </citation>
    <scope>IDENTIFICATION BY MASS SPECTROMETRY [LARGE SCALE ANALYSIS]</scope>
</reference>
<reference key="9">
    <citation type="journal article" date="2008" name="Mol. Cell. Proteomics">
        <title>A multidimensional chromatography technology for in-depth phosphoproteome analysis.</title>
        <authorList>
            <person name="Albuquerque C.P."/>
            <person name="Smolka M.B."/>
            <person name="Payne S.H."/>
            <person name="Bafna V."/>
            <person name="Eng J."/>
            <person name="Zhou H."/>
        </authorList>
    </citation>
    <scope>PHOSPHORYLATION [LARGE SCALE ANALYSIS] AT SER-499 AND SER-503</scope>
    <scope>IDENTIFICATION BY MASS SPECTROMETRY [LARGE SCALE ANALYSIS]</scope>
</reference>
<reference key="10">
    <citation type="journal article" date="2009" name="Science">
        <title>Global analysis of Cdk1 substrate phosphorylation sites provides insights into evolution.</title>
        <authorList>
            <person name="Holt L.J."/>
            <person name="Tuch B.B."/>
            <person name="Villen J."/>
            <person name="Johnson A.D."/>
            <person name="Gygi S.P."/>
            <person name="Morgan D.O."/>
        </authorList>
    </citation>
    <scope>PHOSPHORYLATION [LARGE SCALE ANALYSIS] AT SER-499 AND SER-503</scope>
    <scope>IDENTIFICATION BY MASS SPECTROMETRY [LARGE SCALE ANALYSIS]</scope>
</reference>
<reference key="11">
    <citation type="journal article" date="2012" name="Proc. Natl. Acad. Sci. U.S.A.">
        <title>N-terminal acetylome analyses and functional insights of the N-terminal acetyltransferase NatB.</title>
        <authorList>
            <person name="Van Damme P."/>
            <person name="Lasa M."/>
            <person name="Polevoda B."/>
            <person name="Gazquez C."/>
            <person name="Elosegui-Artola A."/>
            <person name="Kim D.S."/>
            <person name="De Juan-Pardo E."/>
            <person name="Demeyer K."/>
            <person name="Hole K."/>
            <person name="Larrea E."/>
            <person name="Timmerman E."/>
            <person name="Prieto J."/>
            <person name="Arnesen T."/>
            <person name="Sherman F."/>
            <person name="Gevaert K."/>
            <person name="Aldabe R."/>
        </authorList>
    </citation>
    <scope>IDENTIFICATION BY MASS SPECTROMETRY [LARGE SCALE ANALYSIS]</scope>
</reference>
<gene>
    <name type="primary">UTR1</name>
    <name type="ordered locus">YJR049C</name>
    <name type="ORF">J1655</name>
</gene>